<keyword id="KW-0963">Cytoplasm</keyword>
<keyword id="KW-0444">Lipid biosynthesis</keyword>
<keyword id="KW-0443">Lipid metabolism</keyword>
<keyword id="KW-0594">Phospholipid biosynthesis</keyword>
<keyword id="KW-1208">Phospholipid metabolism</keyword>
<keyword id="KW-1185">Reference proteome</keyword>
<keyword id="KW-0808">Transferase</keyword>
<reference key="1">
    <citation type="journal article" date="2001" name="Proc. Natl. Acad. Sci. U.S.A.">
        <title>Complete genomic sequence of Pasteurella multocida Pm70.</title>
        <authorList>
            <person name="May B.J."/>
            <person name="Zhang Q."/>
            <person name="Li L.L."/>
            <person name="Paustian M.L."/>
            <person name="Whittam T.S."/>
            <person name="Kapur V."/>
        </authorList>
    </citation>
    <scope>NUCLEOTIDE SEQUENCE [LARGE SCALE GENOMIC DNA]</scope>
    <source>
        <strain>Pm70</strain>
    </source>
</reference>
<evidence type="ECO:0000255" key="1">
    <source>
        <dbReference type="HAMAP-Rule" id="MF_00019"/>
    </source>
</evidence>
<evidence type="ECO:0000305" key="2"/>
<organism>
    <name type="scientific">Pasteurella multocida (strain Pm70)</name>
    <dbReference type="NCBI Taxonomy" id="272843"/>
    <lineage>
        <taxon>Bacteria</taxon>
        <taxon>Pseudomonadati</taxon>
        <taxon>Pseudomonadota</taxon>
        <taxon>Gammaproteobacteria</taxon>
        <taxon>Pasteurellales</taxon>
        <taxon>Pasteurellaceae</taxon>
        <taxon>Pasteurella</taxon>
    </lineage>
</organism>
<proteinExistence type="inferred from homology"/>
<sequence length="339" mass="36446">MSRLTLALDVMGGDIGPRITIPASLIALEKDPMLSLLLFGDSQQILPLLENIPASMKERLTVCHCSRTIDNEHGISYALRHSKGTSMRLAIEAVQKGDAQGCVSAGNTAALMGLSKILLQPLKGIQRPALISVIPTVDGGKSVMLDLGANIDCDAENLYQFALMGSIFAENTLNLVYPRIALLNIGSEDIKGHKSIRDAAMLLEKDPALNYTGFIEGNFLLNGQADVIVSDGFVGNVALKTLEGAAKNVIALIKGKSKNSLLKPLFSWLLTHIFKESYQRLKRINPDEYNGASLIGLTAVVVKSHGSANSDAFAYAIADAAFQTRQQIPTKILAGLEKY</sequence>
<comment type="function">
    <text evidence="1">Catalyzes the reversible formation of acyl-phosphate (acyl-PO(4)) from acyl-[acyl-carrier-protein] (acyl-ACP). This enzyme utilizes acyl-ACP as fatty acyl donor, but not acyl-CoA.</text>
</comment>
<comment type="catalytic activity">
    <reaction evidence="1">
        <text>a fatty acyl-[ACP] + phosphate = an acyl phosphate + holo-[ACP]</text>
        <dbReference type="Rhea" id="RHEA:42292"/>
        <dbReference type="Rhea" id="RHEA-COMP:9685"/>
        <dbReference type="Rhea" id="RHEA-COMP:14125"/>
        <dbReference type="ChEBI" id="CHEBI:43474"/>
        <dbReference type="ChEBI" id="CHEBI:59918"/>
        <dbReference type="ChEBI" id="CHEBI:64479"/>
        <dbReference type="ChEBI" id="CHEBI:138651"/>
        <dbReference type="EC" id="2.3.1.274"/>
    </reaction>
</comment>
<comment type="pathway">
    <text evidence="1">Lipid metabolism; phospholipid metabolism.</text>
</comment>
<comment type="subunit">
    <text evidence="1">Homodimer. Probably interacts with PlsY.</text>
</comment>
<comment type="subcellular location">
    <subcellularLocation>
        <location evidence="1">Cytoplasm</location>
    </subcellularLocation>
    <text evidence="1">Associated with the membrane possibly through PlsY.</text>
</comment>
<comment type="similarity">
    <text evidence="1">Belongs to the PlsX family.</text>
</comment>
<comment type="sequence caution" evidence="2">
    <conflict type="erroneous initiation">
        <sequence resource="EMBL-CDS" id="AAK03997"/>
    </conflict>
</comment>
<protein>
    <recommendedName>
        <fullName evidence="1">Phosphate acyltransferase</fullName>
        <ecNumber evidence="1">2.3.1.274</ecNumber>
    </recommendedName>
    <alternativeName>
        <fullName evidence="1">Acyl-ACP phosphotransacylase</fullName>
    </alternativeName>
    <alternativeName>
        <fullName evidence="1">Acyl-[acyl-carrier-protein]--phosphate acyltransferase</fullName>
    </alternativeName>
    <alternativeName>
        <fullName evidence="1">Phosphate-acyl-ACP acyltransferase</fullName>
    </alternativeName>
</protein>
<feature type="chain" id="PRO_0000189916" description="Phosphate acyltransferase">
    <location>
        <begin position="1"/>
        <end position="339"/>
    </location>
</feature>
<dbReference type="EC" id="2.3.1.274" evidence="1"/>
<dbReference type="EMBL" id="AE004439">
    <property type="protein sequence ID" value="AAK03997.1"/>
    <property type="status" value="ALT_INIT"/>
    <property type="molecule type" value="Genomic_DNA"/>
</dbReference>
<dbReference type="RefSeq" id="WP_005737187.1">
    <property type="nucleotide sequence ID" value="NC_002663.1"/>
</dbReference>
<dbReference type="SMR" id="P57976"/>
<dbReference type="STRING" id="272843.PM1913"/>
<dbReference type="EnsemblBacteria" id="AAK03997">
    <property type="protein sequence ID" value="AAK03997"/>
    <property type="gene ID" value="PM1913"/>
</dbReference>
<dbReference type="GeneID" id="77207257"/>
<dbReference type="KEGG" id="pmu:PM1913"/>
<dbReference type="PATRIC" id="fig|272843.6.peg.1935"/>
<dbReference type="HOGENOM" id="CLU_039379_1_0_6"/>
<dbReference type="OrthoDB" id="9806408at2"/>
<dbReference type="UniPathway" id="UPA00085"/>
<dbReference type="Proteomes" id="UP000000809">
    <property type="component" value="Chromosome"/>
</dbReference>
<dbReference type="GO" id="GO:0005737">
    <property type="term" value="C:cytoplasm"/>
    <property type="evidence" value="ECO:0007669"/>
    <property type="project" value="UniProtKB-SubCell"/>
</dbReference>
<dbReference type="GO" id="GO:0043811">
    <property type="term" value="F:phosphate:acyl-[acyl carrier protein] acyltransferase activity"/>
    <property type="evidence" value="ECO:0007669"/>
    <property type="project" value="UniProtKB-UniRule"/>
</dbReference>
<dbReference type="GO" id="GO:0006633">
    <property type="term" value="P:fatty acid biosynthetic process"/>
    <property type="evidence" value="ECO:0007669"/>
    <property type="project" value="UniProtKB-UniRule"/>
</dbReference>
<dbReference type="GO" id="GO:0008654">
    <property type="term" value="P:phospholipid biosynthetic process"/>
    <property type="evidence" value="ECO:0007669"/>
    <property type="project" value="UniProtKB-KW"/>
</dbReference>
<dbReference type="Gene3D" id="3.40.718.10">
    <property type="entry name" value="Isopropylmalate Dehydrogenase"/>
    <property type="match status" value="1"/>
</dbReference>
<dbReference type="HAMAP" id="MF_00019">
    <property type="entry name" value="PlsX"/>
    <property type="match status" value="1"/>
</dbReference>
<dbReference type="InterPro" id="IPR003664">
    <property type="entry name" value="FA_synthesis"/>
</dbReference>
<dbReference type="InterPro" id="IPR012281">
    <property type="entry name" value="Phospholipid_synth_PlsX-like"/>
</dbReference>
<dbReference type="NCBIfam" id="TIGR00182">
    <property type="entry name" value="plsX"/>
    <property type="match status" value="1"/>
</dbReference>
<dbReference type="PANTHER" id="PTHR30100">
    <property type="entry name" value="FATTY ACID/PHOSPHOLIPID SYNTHESIS PROTEIN PLSX"/>
    <property type="match status" value="1"/>
</dbReference>
<dbReference type="PANTHER" id="PTHR30100:SF1">
    <property type="entry name" value="PHOSPHATE ACYLTRANSFERASE"/>
    <property type="match status" value="1"/>
</dbReference>
<dbReference type="Pfam" id="PF02504">
    <property type="entry name" value="FA_synthesis"/>
    <property type="match status" value="1"/>
</dbReference>
<dbReference type="PIRSF" id="PIRSF002465">
    <property type="entry name" value="Phsphlp_syn_PlsX"/>
    <property type="match status" value="1"/>
</dbReference>
<dbReference type="SUPFAM" id="SSF53659">
    <property type="entry name" value="Isocitrate/Isopropylmalate dehydrogenase-like"/>
    <property type="match status" value="1"/>
</dbReference>
<name>PLSX_PASMU</name>
<accession>P57976</accession>
<gene>
    <name evidence="1" type="primary">plsX</name>
    <name type="ordered locus">PM1913</name>
</gene>